<reference key="1">
    <citation type="journal article" date="2008" name="J. Bacteriol.">
        <title>Genome sequence of the chemolithoautotrophic bacterium Oligotropha carboxidovorans OM5T.</title>
        <authorList>
            <person name="Paul D."/>
            <person name="Bridges S."/>
            <person name="Burgess S.C."/>
            <person name="Dandass Y."/>
            <person name="Lawrence M.L."/>
        </authorList>
    </citation>
    <scope>NUCLEOTIDE SEQUENCE [LARGE SCALE GENOMIC DNA]</scope>
    <source>
        <strain>ATCC 49405 / DSM 1227 / KCTC 32145 / OM5</strain>
    </source>
</reference>
<reference key="2">
    <citation type="journal article" date="2011" name="J. Bacteriol.">
        <title>Complete genome sequences of the chemolithoautotrophic Oligotropha carboxidovorans strains OM4 and OM5.</title>
        <authorList>
            <person name="Volland S."/>
            <person name="Rachinger M."/>
            <person name="Strittmatter A."/>
            <person name="Daniel R."/>
            <person name="Gottschalk G."/>
            <person name="Meyer O."/>
        </authorList>
    </citation>
    <scope>NUCLEOTIDE SEQUENCE [LARGE SCALE GENOMIC DNA]</scope>
    <source>
        <strain>ATCC 49405 / DSM 1227 / KCTC 32145 / OM5</strain>
    </source>
</reference>
<evidence type="ECO:0000255" key="1">
    <source>
        <dbReference type="HAMAP-Rule" id="MF_00023"/>
    </source>
</evidence>
<evidence type="ECO:0000256" key="2">
    <source>
        <dbReference type="SAM" id="MobiDB-lite"/>
    </source>
</evidence>
<proteinExistence type="inferred from homology"/>
<organism>
    <name type="scientific">Afipia carboxidovorans (strain ATCC 49405 / DSM 1227 / KCTC 32145 / OM5)</name>
    <name type="common">Oligotropha carboxidovorans</name>
    <dbReference type="NCBI Taxonomy" id="504832"/>
    <lineage>
        <taxon>Bacteria</taxon>
        <taxon>Pseudomonadati</taxon>
        <taxon>Pseudomonadota</taxon>
        <taxon>Alphaproteobacteria</taxon>
        <taxon>Hyphomicrobiales</taxon>
        <taxon>Nitrobacteraceae</taxon>
        <taxon>Afipia</taxon>
    </lineage>
</organism>
<accession>B6JGA6</accession>
<accession>F8BXQ0</accession>
<keyword id="KW-0963">Cytoplasm</keyword>
<keyword id="KW-1185">Reference proteome</keyword>
<keyword id="KW-0694">RNA-binding</keyword>
<protein>
    <recommendedName>
        <fullName evidence="1">SsrA-binding protein</fullName>
    </recommendedName>
    <alternativeName>
        <fullName evidence="1">Small protein B</fullName>
    </alternativeName>
</protein>
<dbReference type="EMBL" id="CP001196">
    <property type="protein sequence ID" value="ACI92957.1"/>
    <property type="molecule type" value="Genomic_DNA"/>
</dbReference>
<dbReference type="EMBL" id="CP002826">
    <property type="protein sequence ID" value="AEI06887.1"/>
    <property type="molecule type" value="Genomic_DNA"/>
</dbReference>
<dbReference type="RefSeq" id="WP_012562984.1">
    <property type="nucleotide sequence ID" value="NC_015684.1"/>
</dbReference>
<dbReference type="SMR" id="B6JGA6"/>
<dbReference type="STRING" id="504832.OCA5_c21840"/>
<dbReference type="KEGG" id="oca:OCAR_5832"/>
<dbReference type="KEGG" id="ocg:OCA5_c21840"/>
<dbReference type="PATRIC" id="fig|504832.7.peg.2306"/>
<dbReference type="eggNOG" id="COG0691">
    <property type="taxonomic scope" value="Bacteria"/>
</dbReference>
<dbReference type="HOGENOM" id="CLU_108953_0_1_5"/>
<dbReference type="OrthoDB" id="9805462at2"/>
<dbReference type="Proteomes" id="UP000007730">
    <property type="component" value="Chromosome"/>
</dbReference>
<dbReference type="GO" id="GO:0005829">
    <property type="term" value="C:cytosol"/>
    <property type="evidence" value="ECO:0007669"/>
    <property type="project" value="TreeGrafter"/>
</dbReference>
<dbReference type="GO" id="GO:0003723">
    <property type="term" value="F:RNA binding"/>
    <property type="evidence" value="ECO:0007669"/>
    <property type="project" value="UniProtKB-UniRule"/>
</dbReference>
<dbReference type="GO" id="GO:0070929">
    <property type="term" value="P:trans-translation"/>
    <property type="evidence" value="ECO:0007669"/>
    <property type="project" value="UniProtKB-UniRule"/>
</dbReference>
<dbReference type="CDD" id="cd09294">
    <property type="entry name" value="SmpB"/>
    <property type="match status" value="1"/>
</dbReference>
<dbReference type="Gene3D" id="2.40.280.10">
    <property type="match status" value="1"/>
</dbReference>
<dbReference type="HAMAP" id="MF_00023">
    <property type="entry name" value="SmpB"/>
    <property type="match status" value="1"/>
</dbReference>
<dbReference type="InterPro" id="IPR023620">
    <property type="entry name" value="SmpB"/>
</dbReference>
<dbReference type="InterPro" id="IPR000037">
    <property type="entry name" value="SsrA-bd_prot"/>
</dbReference>
<dbReference type="InterPro" id="IPR020081">
    <property type="entry name" value="SsrA-bd_prot_CS"/>
</dbReference>
<dbReference type="NCBIfam" id="NF003843">
    <property type="entry name" value="PRK05422.1"/>
    <property type="match status" value="1"/>
</dbReference>
<dbReference type="NCBIfam" id="TIGR00086">
    <property type="entry name" value="smpB"/>
    <property type="match status" value="1"/>
</dbReference>
<dbReference type="PANTHER" id="PTHR30308:SF2">
    <property type="entry name" value="SSRA-BINDING PROTEIN"/>
    <property type="match status" value="1"/>
</dbReference>
<dbReference type="PANTHER" id="PTHR30308">
    <property type="entry name" value="TMRNA-BINDING COMPONENT OF TRANS-TRANSLATION TAGGING COMPLEX"/>
    <property type="match status" value="1"/>
</dbReference>
<dbReference type="Pfam" id="PF01668">
    <property type="entry name" value="SmpB"/>
    <property type="match status" value="1"/>
</dbReference>
<dbReference type="SUPFAM" id="SSF74982">
    <property type="entry name" value="Small protein B (SmpB)"/>
    <property type="match status" value="1"/>
</dbReference>
<dbReference type="PROSITE" id="PS01317">
    <property type="entry name" value="SSRP"/>
    <property type="match status" value="1"/>
</dbReference>
<sequence length="157" mass="18291">MTEKKARPIKVVAENRKARFNYSIEDTFEAGVMLTGTEVKSARNGKSTISESYADSKNGEIWLVNANIPEYLQANRFNHEPRRPRKLLLHKRQINKLIGAIEREGMTLIPLKMYFNEQGRLKLELALAKGKKLHDKRETEKKRDWSREKSRLLRARG</sequence>
<name>SSRP_AFIC5</name>
<comment type="function">
    <text evidence="1">Required for rescue of stalled ribosomes mediated by trans-translation. Binds to transfer-messenger RNA (tmRNA), required for stable association of tmRNA with ribosomes. tmRNA and SmpB together mimic tRNA shape, replacing the anticodon stem-loop with SmpB. tmRNA is encoded by the ssrA gene; the 2 termini fold to resemble tRNA(Ala) and it encodes a 'tag peptide', a short internal open reading frame. During trans-translation Ala-aminoacylated tmRNA acts like a tRNA, entering the A-site of stalled ribosomes, displacing the stalled mRNA. The ribosome then switches to translate the ORF on the tmRNA; the nascent peptide is terminated with the 'tag peptide' encoded by the tmRNA and targeted for degradation. The ribosome is freed to recommence translation, which seems to be the essential function of trans-translation.</text>
</comment>
<comment type="subcellular location">
    <subcellularLocation>
        <location evidence="1">Cytoplasm</location>
    </subcellularLocation>
    <text evidence="1">The tmRNA-SmpB complex associates with stalled 70S ribosomes.</text>
</comment>
<comment type="similarity">
    <text evidence="1">Belongs to the SmpB family.</text>
</comment>
<gene>
    <name evidence="1" type="primary">smpB</name>
    <name type="ordered locus">OCAR_5832</name>
    <name type="ordered locus">OCA5_c21840</name>
</gene>
<feature type="chain" id="PRO_1000090170" description="SsrA-binding protein">
    <location>
        <begin position="1"/>
        <end position="157"/>
    </location>
</feature>
<feature type="region of interest" description="Disordered" evidence="2">
    <location>
        <begin position="133"/>
        <end position="157"/>
    </location>
</feature>
<feature type="compositionally biased region" description="Basic and acidic residues" evidence="2">
    <location>
        <begin position="135"/>
        <end position="151"/>
    </location>
</feature>